<keyword id="KW-1185">Reference proteome</keyword>
<accession>Q8KAE4</accession>
<dbReference type="EMBL" id="AE006470">
    <property type="protein sequence ID" value="AAM73435.1"/>
    <property type="molecule type" value="Genomic_DNA"/>
</dbReference>
<dbReference type="RefSeq" id="NP_663093.1">
    <property type="nucleotide sequence ID" value="NC_002932.3"/>
</dbReference>
<dbReference type="RefSeq" id="WP_010933872.1">
    <property type="nucleotide sequence ID" value="NC_002932.3"/>
</dbReference>
<dbReference type="SMR" id="Q8KAE4"/>
<dbReference type="STRING" id="194439.CT2219"/>
<dbReference type="EnsemblBacteria" id="AAM73435">
    <property type="protein sequence ID" value="AAM73435"/>
    <property type="gene ID" value="CT2219"/>
</dbReference>
<dbReference type="KEGG" id="cte:CT2219"/>
<dbReference type="PATRIC" id="fig|194439.7.peg.2013"/>
<dbReference type="eggNOG" id="COG2110">
    <property type="taxonomic scope" value="Bacteria"/>
</dbReference>
<dbReference type="HOGENOM" id="CLU_046550_5_1_10"/>
<dbReference type="OrthoDB" id="6194521at2"/>
<dbReference type="Proteomes" id="UP000001007">
    <property type="component" value="Chromosome"/>
</dbReference>
<dbReference type="CDD" id="cd02908">
    <property type="entry name" value="Macro_OAADPr_deacetylase"/>
    <property type="match status" value="1"/>
</dbReference>
<dbReference type="Gene3D" id="3.40.220.10">
    <property type="entry name" value="Leucine Aminopeptidase, subunit E, domain 1"/>
    <property type="match status" value="1"/>
</dbReference>
<dbReference type="InterPro" id="IPR002589">
    <property type="entry name" value="Macro_dom"/>
</dbReference>
<dbReference type="InterPro" id="IPR043472">
    <property type="entry name" value="Macro_dom-like"/>
</dbReference>
<dbReference type="NCBIfam" id="NF001664">
    <property type="entry name" value="PRK00431.1-6"/>
    <property type="match status" value="1"/>
</dbReference>
<dbReference type="PANTHER" id="PTHR11106">
    <property type="entry name" value="GANGLIOSIDE INDUCED DIFFERENTIATION ASSOCIATED PROTEIN 2-RELATED"/>
    <property type="match status" value="1"/>
</dbReference>
<dbReference type="PANTHER" id="PTHR11106:SF27">
    <property type="entry name" value="MACRO DOMAIN-CONTAINING PROTEIN"/>
    <property type="match status" value="1"/>
</dbReference>
<dbReference type="Pfam" id="PF01661">
    <property type="entry name" value="Macro"/>
    <property type="match status" value="1"/>
</dbReference>
<dbReference type="SMART" id="SM00506">
    <property type="entry name" value="A1pp"/>
    <property type="match status" value="1"/>
</dbReference>
<dbReference type="SUPFAM" id="SSF52949">
    <property type="entry name" value="Macro domain-like"/>
    <property type="match status" value="1"/>
</dbReference>
<dbReference type="PROSITE" id="PS51154">
    <property type="entry name" value="MACRO"/>
    <property type="match status" value="1"/>
</dbReference>
<reference key="1">
    <citation type="journal article" date="2002" name="Proc. Natl. Acad. Sci. U.S.A.">
        <title>The complete genome sequence of Chlorobium tepidum TLS, a photosynthetic, anaerobic, green-sulfur bacterium.</title>
        <authorList>
            <person name="Eisen J.A."/>
            <person name="Nelson K.E."/>
            <person name="Paulsen I.T."/>
            <person name="Heidelberg J.F."/>
            <person name="Wu M."/>
            <person name="Dodson R.J."/>
            <person name="DeBoy R.T."/>
            <person name="Gwinn M.L."/>
            <person name="Nelson W.C."/>
            <person name="Haft D.H."/>
            <person name="Hickey E.K."/>
            <person name="Peterson J.D."/>
            <person name="Durkin A.S."/>
            <person name="Kolonay J.F."/>
            <person name="Yang F."/>
            <person name="Holt I.E."/>
            <person name="Umayam L.A."/>
            <person name="Mason T.M."/>
            <person name="Brenner M."/>
            <person name="Shea T.P."/>
            <person name="Parksey D.S."/>
            <person name="Nierman W.C."/>
            <person name="Feldblyum T.V."/>
            <person name="Hansen C.L."/>
            <person name="Craven M.B."/>
            <person name="Radune D."/>
            <person name="Vamathevan J.J."/>
            <person name="Khouri H.M."/>
            <person name="White O."/>
            <person name="Gruber T.M."/>
            <person name="Ketchum K.A."/>
            <person name="Venter J.C."/>
            <person name="Tettelin H."/>
            <person name="Bryant D.A."/>
            <person name="Fraser C.M."/>
        </authorList>
    </citation>
    <scope>NUCLEOTIDE SEQUENCE [LARGE SCALE GENOMIC DNA]</scope>
    <source>
        <strain>ATCC 49652 / DSM 12025 / NBRC 103806 / TLS</strain>
    </source>
</reference>
<feature type="chain" id="PRO_0000089189" description="Macro domain-containing protein CT2219">
    <location>
        <begin position="1"/>
        <end position="172"/>
    </location>
</feature>
<feature type="domain" description="Macro" evidence="1">
    <location>
        <begin position="1"/>
        <end position="172"/>
    </location>
</feature>
<protein>
    <recommendedName>
        <fullName>Macro domain-containing protein CT2219</fullName>
    </recommendedName>
</protein>
<gene>
    <name type="ordered locus">CT2219</name>
</gene>
<proteinExistence type="inferred from homology"/>
<evidence type="ECO:0000255" key="1">
    <source>
        <dbReference type="PROSITE-ProRule" id="PRU00490"/>
    </source>
</evidence>
<evidence type="ECO:0000305" key="2"/>
<comment type="similarity">
    <text evidence="2">Belongs to the MacroD-type family.</text>
</comment>
<name>Y2219_CHLTE</name>
<organism>
    <name type="scientific">Chlorobaculum tepidum (strain ATCC 49652 / DSM 12025 / NBRC 103806 / TLS)</name>
    <name type="common">Chlorobium tepidum</name>
    <dbReference type="NCBI Taxonomy" id="194439"/>
    <lineage>
        <taxon>Bacteria</taxon>
        <taxon>Pseudomonadati</taxon>
        <taxon>Chlorobiota</taxon>
        <taxon>Chlorobiia</taxon>
        <taxon>Chlorobiales</taxon>
        <taxon>Chlorobiaceae</taxon>
        <taxon>Chlorobaculum</taxon>
    </lineage>
</organism>
<sequence>MPDNVLIHAIKADITSLTVDAIVNAANTSLLGGGGVDGAIHRAAGPKLLEACRELGGCLTGEAKITKGYRLPATFVIHTVGPVWHGGNHGEAELLASCYRNSLKLAIEHHCRTIAFPSISTGIYGYPVEQAAAIAITTVREMLADERGIEKVIFCCFSDRDLDVYQKALAAG</sequence>